<evidence type="ECO:0000255" key="1">
    <source>
        <dbReference type="HAMAP-Rule" id="MF_01626"/>
    </source>
</evidence>
<keyword id="KW-0143">Chaperone</keyword>
<keyword id="KW-0963">Cytoplasm</keyword>
<keyword id="KW-1185">Reference proteome</keyword>
<protein>
    <recommendedName>
        <fullName evidence="1">Regulatory protein ViaA</fullName>
    </recommendedName>
    <alternativeName>
        <fullName evidence="1">VWA interacting with AAA+ ATPase</fullName>
    </alternativeName>
</protein>
<accession>A9MJQ5</accession>
<reference key="1">
    <citation type="submission" date="2007-11" db="EMBL/GenBank/DDBJ databases">
        <authorList>
            <consortium name="The Salmonella enterica serovar Arizonae Genome Sequencing Project"/>
            <person name="McClelland M."/>
            <person name="Sanderson E.K."/>
            <person name="Porwollik S."/>
            <person name="Spieth J."/>
            <person name="Clifton W.S."/>
            <person name="Fulton R."/>
            <person name="Chunyan W."/>
            <person name="Wollam A."/>
            <person name="Shah N."/>
            <person name="Pepin K."/>
            <person name="Bhonagiri V."/>
            <person name="Nash W."/>
            <person name="Johnson M."/>
            <person name="Thiruvilangam P."/>
            <person name="Wilson R."/>
        </authorList>
    </citation>
    <scope>NUCLEOTIDE SEQUENCE [LARGE SCALE GENOMIC DNA]</scope>
    <source>
        <strain>ATCC BAA-731 / CDC346-86 / RSK2980</strain>
    </source>
</reference>
<feature type="chain" id="PRO_1000088100" description="Regulatory protein ViaA">
    <location>
        <begin position="1"/>
        <end position="483"/>
    </location>
</feature>
<proteinExistence type="inferred from homology"/>
<comment type="function">
    <text evidence="1">Component of the RavA-ViaA chaperone complex, which may act on the membrane to optimize the function of some of the respiratory chains. ViaA stimulates the ATPase activity of RavA.</text>
</comment>
<comment type="subunit">
    <text evidence="1">Homodimer. Interacts with RavA.</text>
</comment>
<comment type="subcellular location">
    <subcellularLocation>
        <location evidence="1">Cytoplasm</location>
    </subcellularLocation>
</comment>
<comment type="similarity">
    <text evidence="1">Belongs to the ViaA family.</text>
</comment>
<organism>
    <name type="scientific">Salmonella arizonae (strain ATCC BAA-731 / CDC346-86 / RSK2980)</name>
    <dbReference type="NCBI Taxonomy" id="41514"/>
    <lineage>
        <taxon>Bacteria</taxon>
        <taxon>Pseudomonadati</taxon>
        <taxon>Pseudomonadota</taxon>
        <taxon>Gammaproteobacteria</taxon>
        <taxon>Enterobacterales</taxon>
        <taxon>Enterobacteriaceae</taxon>
        <taxon>Salmonella</taxon>
    </lineage>
</organism>
<dbReference type="EMBL" id="CP000880">
    <property type="protein sequence ID" value="ABX23566.1"/>
    <property type="molecule type" value="Genomic_DNA"/>
</dbReference>
<dbReference type="SMR" id="A9MJQ5"/>
<dbReference type="STRING" id="41514.SARI_03772"/>
<dbReference type="KEGG" id="ses:SARI_03772"/>
<dbReference type="HOGENOM" id="CLU_022130_0_0_6"/>
<dbReference type="Proteomes" id="UP000002084">
    <property type="component" value="Chromosome"/>
</dbReference>
<dbReference type="GO" id="GO:0005829">
    <property type="term" value="C:cytosol"/>
    <property type="evidence" value="ECO:0007669"/>
    <property type="project" value="TreeGrafter"/>
</dbReference>
<dbReference type="CDD" id="cd01462">
    <property type="entry name" value="VWA_YIEM_type"/>
    <property type="match status" value="1"/>
</dbReference>
<dbReference type="Gene3D" id="3.40.50.410">
    <property type="entry name" value="von Willebrand factor, type A domain"/>
    <property type="match status" value="1"/>
</dbReference>
<dbReference type="HAMAP" id="MF_01626">
    <property type="entry name" value="ViaA"/>
    <property type="match status" value="1"/>
</dbReference>
<dbReference type="InterPro" id="IPR008912">
    <property type="entry name" value="Uncharacterised_CoxE"/>
</dbReference>
<dbReference type="InterPro" id="IPR023481">
    <property type="entry name" value="Uncharacterised_ViaA"/>
</dbReference>
<dbReference type="InterPro" id="IPR002035">
    <property type="entry name" value="VWF_A"/>
</dbReference>
<dbReference type="InterPro" id="IPR036465">
    <property type="entry name" value="vWFA_dom_sf"/>
</dbReference>
<dbReference type="NCBIfam" id="NF008230">
    <property type="entry name" value="PRK10997.1"/>
    <property type="match status" value="1"/>
</dbReference>
<dbReference type="PANTHER" id="PTHR36846">
    <property type="entry name" value="PROTEIN VIAA"/>
    <property type="match status" value="1"/>
</dbReference>
<dbReference type="PANTHER" id="PTHR36846:SF1">
    <property type="entry name" value="PROTEIN VIAA"/>
    <property type="match status" value="1"/>
</dbReference>
<dbReference type="Pfam" id="PF05762">
    <property type="entry name" value="VWA_CoxE"/>
    <property type="match status" value="1"/>
</dbReference>
<dbReference type="SMART" id="SM00327">
    <property type="entry name" value="VWA"/>
    <property type="match status" value="1"/>
</dbReference>
<dbReference type="SUPFAM" id="SSF53300">
    <property type="entry name" value="vWA-like"/>
    <property type="match status" value="1"/>
</dbReference>
<name>VIAA_SALAR</name>
<sequence length="483" mass="55611">MLTLDTLNVMLAVSEEGMVEEMILALLASPQLVIFFEKFPRLKNAVTADLPRWREALRSRLKDARVPQKLTEEVMCYQQSQLLSTPQFIVQLPQILALLHRLHSPYAAQAKQLVESNSTFTPSLHTLFLQRWRLSLVVQATTLNQQLLEEEREQLLSDVQERMTLSGQLEPTLAENDNAAGRLWDMSAGQLKRGDYQLIVKYGEFLAAQPELKQLAEQLGRSREAKSVPKKDAPMETFRTLVREPATVPEQVDGIQQSDDILRLLPPELATLGITELEYEFYRRLVEKQLLTYRLHGEAWREKVTERPVVHQDVDKQPRGPFIVCVDTSGSMGGFNEQCAKAFCLALMRVALADNRRCFIMLFSTEVVRYELSGPEGIEQAIRFLSQRFRGGTDIASCFRAIIERMQRRKWFDADAVVISDFIAQRLPDDVVSKVGELQRLHQHRFHAVAMSAHGKPGIMRIFDHIWRFDTGMRSRLLRRWRR</sequence>
<gene>
    <name evidence="1" type="primary">viaA</name>
    <name type="ordered locus">SARI_03772</name>
</gene>